<protein>
    <recommendedName>
        <fullName evidence="1">DNA-directed RNA polymerase subunit Rpo10</fullName>
        <ecNumber evidence="1">2.7.7.6</ecNumber>
    </recommendedName>
    <alternativeName>
        <fullName evidence="1">DNA-directed RNA polymerase subunit N</fullName>
    </alternativeName>
</protein>
<organism>
    <name type="scientific">Methanosarcina barkeri (strain Fusaro / DSM 804)</name>
    <dbReference type="NCBI Taxonomy" id="269797"/>
    <lineage>
        <taxon>Archaea</taxon>
        <taxon>Methanobacteriati</taxon>
        <taxon>Methanobacteriota</taxon>
        <taxon>Stenosarchaea group</taxon>
        <taxon>Methanomicrobia</taxon>
        <taxon>Methanosarcinales</taxon>
        <taxon>Methanosarcinaceae</taxon>
        <taxon>Methanosarcina</taxon>
    </lineage>
</organism>
<name>RPO10_METBF</name>
<proteinExistence type="inferred from homology"/>
<reference key="1">
    <citation type="journal article" date="2006" name="J. Bacteriol.">
        <title>The Methanosarcina barkeri genome: comparative analysis with Methanosarcina acetivorans and Methanosarcina mazei reveals extensive rearrangement within methanosarcinal genomes.</title>
        <authorList>
            <person name="Maeder D.L."/>
            <person name="Anderson I."/>
            <person name="Brettin T.S."/>
            <person name="Bruce D.C."/>
            <person name="Gilna P."/>
            <person name="Han C.S."/>
            <person name="Lapidus A."/>
            <person name="Metcalf W.W."/>
            <person name="Saunders E."/>
            <person name="Tapia R."/>
            <person name="Sowers K.R."/>
        </authorList>
    </citation>
    <scope>NUCLEOTIDE SEQUENCE [LARGE SCALE GENOMIC DNA]</scope>
    <source>
        <strain>Fusaro / DSM 804</strain>
    </source>
</reference>
<dbReference type="EC" id="2.7.7.6" evidence="1"/>
<dbReference type="EMBL" id="CP000099">
    <property type="protein sequence ID" value="AAZ70384.1"/>
    <property type="molecule type" value="Genomic_DNA"/>
</dbReference>
<dbReference type="SMR" id="Q46CK8"/>
<dbReference type="STRING" id="269797.Mbar_A1425"/>
<dbReference type="PaxDb" id="269797-Mbar_A1425"/>
<dbReference type="KEGG" id="mba:Mbar_A1425"/>
<dbReference type="eggNOG" id="arCOG04244">
    <property type="taxonomic scope" value="Archaea"/>
</dbReference>
<dbReference type="HOGENOM" id="CLU_143122_2_1_2"/>
<dbReference type="OrthoDB" id="371754at2157"/>
<dbReference type="GO" id="GO:0005737">
    <property type="term" value="C:cytoplasm"/>
    <property type="evidence" value="ECO:0007669"/>
    <property type="project" value="UniProtKB-SubCell"/>
</dbReference>
<dbReference type="GO" id="GO:0000428">
    <property type="term" value="C:DNA-directed RNA polymerase complex"/>
    <property type="evidence" value="ECO:0007669"/>
    <property type="project" value="UniProtKB-KW"/>
</dbReference>
<dbReference type="GO" id="GO:0003677">
    <property type="term" value="F:DNA binding"/>
    <property type="evidence" value="ECO:0007669"/>
    <property type="project" value="InterPro"/>
</dbReference>
<dbReference type="GO" id="GO:0003899">
    <property type="term" value="F:DNA-directed RNA polymerase activity"/>
    <property type="evidence" value="ECO:0007669"/>
    <property type="project" value="UniProtKB-UniRule"/>
</dbReference>
<dbReference type="GO" id="GO:0008270">
    <property type="term" value="F:zinc ion binding"/>
    <property type="evidence" value="ECO:0007669"/>
    <property type="project" value="UniProtKB-UniRule"/>
</dbReference>
<dbReference type="GO" id="GO:0006351">
    <property type="term" value="P:DNA-templated transcription"/>
    <property type="evidence" value="ECO:0007669"/>
    <property type="project" value="UniProtKB-UniRule"/>
</dbReference>
<dbReference type="FunFam" id="1.10.10.60:FF:000335">
    <property type="entry name" value="DNA-directed RNA polymerase subunit N, putative"/>
    <property type="match status" value="1"/>
</dbReference>
<dbReference type="Gene3D" id="1.10.10.60">
    <property type="entry name" value="Homeodomain-like"/>
    <property type="match status" value="1"/>
</dbReference>
<dbReference type="HAMAP" id="MF_00250">
    <property type="entry name" value="RNApol_arch_Rpo10"/>
    <property type="match status" value="1"/>
</dbReference>
<dbReference type="InterPro" id="IPR023580">
    <property type="entry name" value="RNA_pol_su_RPB10"/>
</dbReference>
<dbReference type="InterPro" id="IPR020789">
    <property type="entry name" value="RNA_pol_suN_Zn-BS"/>
</dbReference>
<dbReference type="InterPro" id="IPR000268">
    <property type="entry name" value="RPABC5/Rpb10"/>
</dbReference>
<dbReference type="NCBIfam" id="NF003089">
    <property type="entry name" value="PRK04016.1"/>
    <property type="match status" value="1"/>
</dbReference>
<dbReference type="PANTHER" id="PTHR23431:SF3">
    <property type="entry name" value="DNA-DIRECTED RNA POLYMERASES I, II, AND III SUBUNIT RPABC5"/>
    <property type="match status" value="1"/>
</dbReference>
<dbReference type="PANTHER" id="PTHR23431">
    <property type="entry name" value="DNA-DIRECTED RNA POLYMERASES I, II, AND III SUBUNIT RPABC5 FAMILY MEMBER"/>
    <property type="match status" value="1"/>
</dbReference>
<dbReference type="Pfam" id="PF01194">
    <property type="entry name" value="RNA_pol_N"/>
    <property type="match status" value="1"/>
</dbReference>
<dbReference type="PIRSF" id="PIRSF005653">
    <property type="entry name" value="RNA_pol_N/8_sub"/>
    <property type="match status" value="1"/>
</dbReference>
<dbReference type="SUPFAM" id="SSF46924">
    <property type="entry name" value="RNA polymerase subunit RPB10"/>
    <property type="match status" value="1"/>
</dbReference>
<dbReference type="PROSITE" id="PS01112">
    <property type="entry name" value="RNA_POL_N_8KD"/>
    <property type="match status" value="1"/>
</dbReference>
<feature type="chain" id="PRO_0000304195" description="DNA-directed RNA polymerase subunit Rpo10">
    <location>
        <begin position="1"/>
        <end position="62"/>
    </location>
</feature>
<feature type="binding site" evidence="1">
    <location>
        <position position="6"/>
    </location>
    <ligand>
        <name>Zn(2+)</name>
        <dbReference type="ChEBI" id="CHEBI:29105"/>
    </ligand>
</feature>
<feature type="binding site" evidence="1">
    <location>
        <position position="9"/>
    </location>
    <ligand>
        <name>Zn(2+)</name>
        <dbReference type="ChEBI" id="CHEBI:29105"/>
    </ligand>
</feature>
<feature type="binding site" evidence="1">
    <location>
        <position position="43"/>
    </location>
    <ligand>
        <name>Zn(2+)</name>
        <dbReference type="ChEBI" id="CHEBI:29105"/>
    </ligand>
</feature>
<feature type="binding site" evidence="1">
    <location>
        <position position="44"/>
    </location>
    <ligand>
        <name>Zn(2+)</name>
        <dbReference type="ChEBI" id="CHEBI:29105"/>
    </ligand>
</feature>
<evidence type="ECO:0000255" key="1">
    <source>
        <dbReference type="HAMAP-Rule" id="MF_00250"/>
    </source>
</evidence>
<accession>Q46CK8</accession>
<keyword id="KW-0963">Cytoplasm</keyword>
<keyword id="KW-0240">DNA-directed RNA polymerase</keyword>
<keyword id="KW-0479">Metal-binding</keyword>
<keyword id="KW-0548">Nucleotidyltransferase</keyword>
<keyword id="KW-0804">Transcription</keyword>
<keyword id="KW-0808">Transferase</keyword>
<keyword id="KW-0862">Zinc</keyword>
<sequence length="62" mass="7156">MIPVRCFSCGKVISNYWDEYKRRVSDGENAAAVLDDLGITRYCCRRMLLSHVELVDVLSPYQ</sequence>
<comment type="function">
    <text evidence="1">DNA-dependent RNA polymerase (RNAP) catalyzes the transcription of DNA into RNA using the four ribonucleoside triphosphates as substrates.</text>
</comment>
<comment type="catalytic activity">
    <reaction evidence="1">
        <text>RNA(n) + a ribonucleoside 5'-triphosphate = RNA(n+1) + diphosphate</text>
        <dbReference type="Rhea" id="RHEA:21248"/>
        <dbReference type="Rhea" id="RHEA-COMP:14527"/>
        <dbReference type="Rhea" id="RHEA-COMP:17342"/>
        <dbReference type="ChEBI" id="CHEBI:33019"/>
        <dbReference type="ChEBI" id="CHEBI:61557"/>
        <dbReference type="ChEBI" id="CHEBI:140395"/>
        <dbReference type="EC" id="2.7.7.6"/>
    </reaction>
</comment>
<comment type="cofactor">
    <cofactor evidence="1">
        <name>Zn(2+)</name>
        <dbReference type="ChEBI" id="CHEBI:29105"/>
    </cofactor>
    <text evidence="1">Binds 1 zinc ion.</text>
</comment>
<comment type="subunit">
    <text evidence="1">Part of the RNA polymerase complex.</text>
</comment>
<comment type="subcellular location">
    <subcellularLocation>
        <location evidence="1">Cytoplasm</location>
    </subcellularLocation>
</comment>
<comment type="similarity">
    <text evidence="1">Belongs to the archaeal Rpo10/eukaryotic RPB10 RNA polymerase subunit family.</text>
</comment>
<gene>
    <name evidence="1" type="primary">rpo10</name>
    <name evidence="1" type="synonym">rpoN</name>
    <name type="ordered locus">Mbar_A1425</name>
</gene>